<proteinExistence type="inferred from homology"/>
<comment type="function">
    <text evidence="1">Functions in the biosynthesis of branched-chain amino acids. Catalyzes the dehydration of (2R,3R)-2,3-dihydroxy-3-methylpentanoate (2,3-dihydroxy-3-methylvalerate) into 2-oxo-3-methylpentanoate (2-oxo-3-methylvalerate) and of (2R)-2,3-dihydroxy-3-methylbutanoate (2,3-dihydroxyisovalerate) into 2-oxo-3-methylbutanoate (2-oxoisovalerate), the penultimate precursor to L-isoleucine and L-valine, respectively.</text>
</comment>
<comment type="catalytic activity">
    <reaction evidence="1">
        <text>(2R)-2,3-dihydroxy-3-methylbutanoate = 3-methyl-2-oxobutanoate + H2O</text>
        <dbReference type="Rhea" id="RHEA:24809"/>
        <dbReference type="ChEBI" id="CHEBI:11851"/>
        <dbReference type="ChEBI" id="CHEBI:15377"/>
        <dbReference type="ChEBI" id="CHEBI:49072"/>
        <dbReference type="EC" id="4.2.1.9"/>
    </reaction>
    <physiologicalReaction direction="left-to-right" evidence="1">
        <dbReference type="Rhea" id="RHEA:24810"/>
    </physiologicalReaction>
</comment>
<comment type="catalytic activity">
    <reaction evidence="1">
        <text>(2R,3R)-2,3-dihydroxy-3-methylpentanoate = (S)-3-methyl-2-oxopentanoate + H2O</text>
        <dbReference type="Rhea" id="RHEA:27694"/>
        <dbReference type="ChEBI" id="CHEBI:15377"/>
        <dbReference type="ChEBI" id="CHEBI:35146"/>
        <dbReference type="ChEBI" id="CHEBI:49258"/>
        <dbReference type="EC" id="4.2.1.9"/>
    </reaction>
    <physiologicalReaction direction="left-to-right" evidence="1">
        <dbReference type="Rhea" id="RHEA:27695"/>
    </physiologicalReaction>
</comment>
<comment type="cofactor">
    <cofactor evidence="1">
        <name>[2Fe-2S] cluster</name>
        <dbReference type="ChEBI" id="CHEBI:190135"/>
    </cofactor>
    <text evidence="1">Binds 1 [2Fe-2S] cluster per subunit. This cluster acts as a Lewis acid cofactor.</text>
</comment>
<comment type="cofactor">
    <cofactor evidence="1">
        <name>Mg(2+)</name>
        <dbReference type="ChEBI" id="CHEBI:18420"/>
    </cofactor>
</comment>
<comment type="pathway">
    <text evidence="1">Amino-acid biosynthesis; L-isoleucine biosynthesis; L-isoleucine from 2-oxobutanoate: step 3/4.</text>
</comment>
<comment type="pathway">
    <text evidence="1">Amino-acid biosynthesis; L-valine biosynthesis; L-valine from pyruvate: step 3/4.</text>
</comment>
<comment type="subunit">
    <text evidence="1">Homodimer.</text>
</comment>
<comment type="similarity">
    <text evidence="1">Belongs to the IlvD/Edd family.</text>
</comment>
<reference key="1">
    <citation type="journal article" date="2001" name="Science">
        <title>The genome of the natural genetic engineer Agrobacterium tumefaciens C58.</title>
        <authorList>
            <person name="Wood D.W."/>
            <person name="Setubal J.C."/>
            <person name="Kaul R."/>
            <person name="Monks D.E."/>
            <person name="Kitajima J.P."/>
            <person name="Okura V.K."/>
            <person name="Zhou Y."/>
            <person name="Chen L."/>
            <person name="Wood G.E."/>
            <person name="Almeida N.F. Jr."/>
            <person name="Woo L."/>
            <person name="Chen Y."/>
            <person name="Paulsen I.T."/>
            <person name="Eisen J.A."/>
            <person name="Karp P.D."/>
            <person name="Bovee D. Sr."/>
            <person name="Chapman P."/>
            <person name="Clendenning J."/>
            <person name="Deatherage G."/>
            <person name="Gillet W."/>
            <person name="Grant C."/>
            <person name="Kutyavin T."/>
            <person name="Levy R."/>
            <person name="Li M.-J."/>
            <person name="McClelland E."/>
            <person name="Palmieri A."/>
            <person name="Raymond C."/>
            <person name="Rouse G."/>
            <person name="Saenphimmachak C."/>
            <person name="Wu Z."/>
            <person name="Romero P."/>
            <person name="Gordon D."/>
            <person name="Zhang S."/>
            <person name="Yoo H."/>
            <person name="Tao Y."/>
            <person name="Biddle P."/>
            <person name="Jung M."/>
            <person name="Krespan W."/>
            <person name="Perry M."/>
            <person name="Gordon-Kamm B."/>
            <person name="Liao L."/>
            <person name="Kim S."/>
            <person name="Hendrick C."/>
            <person name="Zhao Z.-Y."/>
            <person name="Dolan M."/>
            <person name="Chumley F."/>
            <person name="Tingey S.V."/>
            <person name="Tomb J.-F."/>
            <person name="Gordon M.P."/>
            <person name="Olson M.V."/>
            <person name="Nester E.W."/>
        </authorList>
    </citation>
    <scope>NUCLEOTIDE SEQUENCE [LARGE SCALE GENOMIC DNA]</scope>
    <source>
        <strain>C58 / ATCC 33970</strain>
    </source>
</reference>
<reference key="2">
    <citation type="journal article" date="2001" name="Science">
        <title>Genome sequence of the plant pathogen and biotechnology agent Agrobacterium tumefaciens C58.</title>
        <authorList>
            <person name="Goodner B."/>
            <person name="Hinkle G."/>
            <person name="Gattung S."/>
            <person name="Miller N."/>
            <person name="Blanchard M."/>
            <person name="Qurollo B."/>
            <person name="Goldman B.S."/>
            <person name="Cao Y."/>
            <person name="Askenazi M."/>
            <person name="Halling C."/>
            <person name="Mullin L."/>
            <person name="Houmiel K."/>
            <person name="Gordon J."/>
            <person name="Vaudin M."/>
            <person name="Iartchouk O."/>
            <person name="Epp A."/>
            <person name="Liu F."/>
            <person name="Wollam C."/>
            <person name="Allinger M."/>
            <person name="Doughty D."/>
            <person name="Scott C."/>
            <person name="Lappas C."/>
            <person name="Markelz B."/>
            <person name="Flanagan C."/>
            <person name="Crowell C."/>
            <person name="Gurson J."/>
            <person name="Lomo C."/>
            <person name="Sear C."/>
            <person name="Strub G."/>
            <person name="Cielo C."/>
            <person name="Slater S."/>
        </authorList>
    </citation>
    <scope>NUCLEOTIDE SEQUENCE [LARGE SCALE GENOMIC DNA]</scope>
    <source>
        <strain>C58 / ATCC 33970</strain>
    </source>
</reference>
<organism>
    <name type="scientific">Agrobacterium fabrum (strain C58 / ATCC 33970)</name>
    <name type="common">Agrobacterium tumefaciens (strain C58)</name>
    <dbReference type="NCBI Taxonomy" id="176299"/>
    <lineage>
        <taxon>Bacteria</taxon>
        <taxon>Pseudomonadati</taxon>
        <taxon>Pseudomonadota</taxon>
        <taxon>Alphaproteobacteria</taxon>
        <taxon>Hyphomicrobiales</taxon>
        <taxon>Rhizobiaceae</taxon>
        <taxon>Rhizobium/Agrobacterium group</taxon>
        <taxon>Agrobacterium</taxon>
        <taxon>Agrobacterium tumefaciens complex</taxon>
    </lineage>
</organism>
<accession>Q8UE43</accession>
<gene>
    <name evidence="1" type="primary">ilvD</name>
    <name type="ordered locus">Atu1918</name>
    <name type="ORF">AGR_C_3510</name>
</gene>
<keyword id="KW-0001">2Fe-2S</keyword>
<keyword id="KW-0028">Amino-acid biosynthesis</keyword>
<keyword id="KW-0100">Branched-chain amino acid biosynthesis</keyword>
<keyword id="KW-0408">Iron</keyword>
<keyword id="KW-0411">Iron-sulfur</keyword>
<keyword id="KW-0456">Lyase</keyword>
<keyword id="KW-0460">Magnesium</keyword>
<keyword id="KW-0479">Metal-binding</keyword>
<keyword id="KW-1185">Reference proteome</keyword>
<protein>
    <recommendedName>
        <fullName evidence="1">Dihydroxy-acid dehydratase</fullName>
        <shortName evidence="1">DAD</shortName>
        <ecNumber evidence="1">4.2.1.9</ecNumber>
    </recommendedName>
</protein>
<sequence length="611" mass="65024">MPAYRSRTTTHGRNMAGARGLWRATGMKDSDFGKPIIAVVNSFTQFVPGHVHLKDLGQLVAREIEAAGGVAKEFNTIAVDDGIAMGHDGMLYSLPSREIIADSVEYMVNAHCADAMVCISNCDKITPGMLNAAMRLNIPAVFVSGGPMEAGKVVLHGKTVALDLVDAMVAAADDKISDEDVKIIERSACPTCGSCSGMFTANSMNCLTEALGLSLPGNGSTLATHSDRKRLFVEAGHLIVDLARRYYEQDDETVLPRTIANKAAFENAMSLDIAMGGSTNTVLHILAAAHEGGVDFGMEDIDRLSRKVPCLSKVAPAKQDVHMEDVHRAGGIMRILGELERGGLINRDTYTVHEATLGDAIDRWDITRTNSEMVRQFFKAAPGGVPTQVAFSQSSRWDDLDTDSDNGVIRSVEKPFSKDGGLAVLYGNIALDGCIVKTAGVDESILKFNGSAVVYESQDAAVKGILGNEVKAGDVVVIRYEGPKGGPGMQEMLYPTSYLKSKGLGKACALITDGRFSGGTSGLSIGHASPEAAQGGAIGLVRQGDLIEIDIPNRTINLKVSDAELAARRAEQEEKGWKPEAPRKRNVTTALKAYAAFASSADKGAVRILPE</sequence>
<feature type="chain" id="PRO_0000103424" description="Dihydroxy-acid dehydratase">
    <location>
        <begin position="1"/>
        <end position="611"/>
    </location>
</feature>
<feature type="active site" description="Proton acceptor" evidence="1">
    <location>
        <position position="517"/>
    </location>
</feature>
<feature type="binding site" evidence="1">
    <location>
        <position position="81"/>
    </location>
    <ligand>
        <name>Mg(2+)</name>
        <dbReference type="ChEBI" id="CHEBI:18420"/>
    </ligand>
</feature>
<feature type="binding site" evidence="1">
    <location>
        <position position="122"/>
    </location>
    <ligand>
        <name>[2Fe-2S] cluster</name>
        <dbReference type="ChEBI" id="CHEBI:190135"/>
    </ligand>
</feature>
<feature type="binding site" evidence="1">
    <location>
        <position position="123"/>
    </location>
    <ligand>
        <name>Mg(2+)</name>
        <dbReference type="ChEBI" id="CHEBI:18420"/>
    </ligand>
</feature>
<feature type="binding site" description="via carbamate group" evidence="1">
    <location>
        <position position="124"/>
    </location>
    <ligand>
        <name>Mg(2+)</name>
        <dbReference type="ChEBI" id="CHEBI:18420"/>
    </ligand>
</feature>
<feature type="binding site" evidence="1">
    <location>
        <position position="195"/>
    </location>
    <ligand>
        <name>[2Fe-2S] cluster</name>
        <dbReference type="ChEBI" id="CHEBI:190135"/>
    </ligand>
</feature>
<feature type="binding site" evidence="1">
    <location>
        <position position="491"/>
    </location>
    <ligand>
        <name>Mg(2+)</name>
        <dbReference type="ChEBI" id="CHEBI:18420"/>
    </ligand>
</feature>
<feature type="modified residue" description="N6-carboxylysine" evidence="1">
    <location>
        <position position="124"/>
    </location>
</feature>
<evidence type="ECO:0000255" key="1">
    <source>
        <dbReference type="HAMAP-Rule" id="MF_00012"/>
    </source>
</evidence>
<dbReference type="EC" id="4.2.1.9" evidence="1"/>
<dbReference type="EMBL" id="AE007869">
    <property type="protein sequence ID" value="AAK87678.2"/>
    <property type="molecule type" value="Genomic_DNA"/>
</dbReference>
<dbReference type="PIR" id="AD2812">
    <property type="entry name" value="AD2812"/>
</dbReference>
<dbReference type="PIR" id="E97590">
    <property type="entry name" value="E97590"/>
</dbReference>
<dbReference type="RefSeq" id="NP_354893.2">
    <property type="nucleotide sequence ID" value="NC_003062.2"/>
</dbReference>
<dbReference type="RefSeq" id="WP_010971959.1">
    <property type="nucleotide sequence ID" value="NC_003062.2"/>
</dbReference>
<dbReference type="SMR" id="Q8UE43"/>
<dbReference type="STRING" id="176299.Atu1918"/>
<dbReference type="EnsemblBacteria" id="AAK87678">
    <property type="protein sequence ID" value="AAK87678"/>
    <property type="gene ID" value="Atu1918"/>
</dbReference>
<dbReference type="GeneID" id="1133956"/>
<dbReference type="KEGG" id="atu:Atu1918"/>
<dbReference type="PATRIC" id="fig|176299.10.peg.1928"/>
<dbReference type="eggNOG" id="COG0129">
    <property type="taxonomic scope" value="Bacteria"/>
</dbReference>
<dbReference type="HOGENOM" id="CLU_014271_4_2_5"/>
<dbReference type="OrthoDB" id="9807077at2"/>
<dbReference type="PhylomeDB" id="Q8UE43"/>
<dbReference type="BioCyc" id="AGRO:ATU1918-MONOMER"/>
<dbReference type="UniPathway" id="UPA00047">
    <property type="reaction ID" value="UER00057"/>
</dbReference>
<dbReference type="UniPathway" id="UPA00049">
    <property type="reaction ID" value="UER00061"/>
</dbReference>
<dbReference type="Proteomes" id="UP000000813">
    <property type="component" value="Chromosome circular"/>
</dbReference>
<dbReference type="GO" id="GO:0005829">
    <property type="term" value="C:cytosol"/>
    <property type="evidence" value="ECO:0007669"/>
    <property type="project" value="TreeGrafter"/>
</dbReference>
<dbReference type="GO" id="GO:0051537">
    <property type="term" value="F:2 iron, 2 sulfur cluster binding"/>
    <property type="evidence" value="ECO:0007669"/>
    <property type="project" value="UniProtKB-UniRule"/>
</dbReference>
<dbReference type="GO" id="GO:0004160">
    <property type="term" value="F:dihydroxy-acid dehydratase activity"/>
    <property type="evidence" value="ECO:0007669"/>
    <property type="project" value="UniProtKB-UniRule"/>
</dbReference>
<dbReference type="GO" id="GO:0000287">
    <property type="term" value="F:magnesium ion binding"/>
    <property type="evidence" value="ECO:0007669"/>
    <property type="project" value="UniProtKB-UniRule"/>
</dbReference>
<dbReference type="GO" id="GO:0009097">
    <property type="term" value="P:isoleucine biosynthetic process"/>
    <property type="evidence" value="ECO:0007669"/>
    <property type="project" value="UniProtKB-UniRule"/>
</dbReference>
<dbReference type="GO" id="GO:0009099">
    <property type="term" value="P:L-valine biosynthetic process"/>
    <property type="evidence" value="ECO:0007669"/>
    <property type="project" value="UniProtKB-UniRule"/>
</dbReference>
<dbReference type="FunFam" id="3.50.30.80:FF:000001">
    <property type="entry name" value="Dihydroxy-acid dehydratase"/>
    <property type="match status" value="1"/>
</dbReference>
<dbReference type="Gene3D" id="3.50.30.80">
    <property type="entry name" value="IlvD/EDD C-terminal domain-like"/>
    <property type="match status" value="1"/>
</dbReference>
<dbReference type="HAMAP" id="MF_00012">
    <property type="entry name" value="IlvD"/>
    <property type="match status" value="1"/>
</dbReference>
<dbReference type="InterPro" id="IPR042096">
    <property type="entry name" value="Dihydro-acid_dehy_C"/>
</dbReference>
<dbReference type="InterPro" id="IPR004404">
    <property type="entry name" value="DihydroxyA_deHydtase"/>
</dbReference>
<dbReference type="InterPro" id="IPR020558">
    <property type="entry name" value="DiOHA_6PGluconate_deHydtase_CS"/>
</dbReference>
<dbReference type="InterPro" id="IPR056740">
    <property type="entry name" value="ILV_EDD_C"/>
</dbReference>
<dbReference type="InterPro" id="IPR000581">
    <property type="entry name" value="ILV_EDD_N"/>
</dbReference>
<dbReference type="InterPro" id="IPR037237">
    <property type="entry name" value="IlvD/EDD_N"/>
</dbReference>
<dbReference type="NCBIfam" id="TIGR00110">
    <property type="entry name" value="ilvD"/>
    <property type="match status" value="1"/>
</dbReference>
<dbReference type="NCBIfam" id="NF009103">
    <property type="entry name" value="PRK12448.1"/>
    <property type="match status" value="1"/>
</dbReference>
<dbReference type="PANTHER" id="PTHR43661">
    <property type="entry name" value="D-XYLONATE DEHYDRATASE"/>
    <property type="match status" value="1"/>
</dbReference>
<dbReference type="PANTHER" id="PTHR43661:SF3">
    <property type="entry name" value="D-XYLONATE DEHYDRATASE YAGF-RELATED"/>
    <property type="match status" value="1"/>
</dbReference>
<dbReference type="Pfam" id="PF24877">
    <property type="entry name" value="ILV_EDD_C"/>
    <property type="match status" value="1"/>
</dbReference>
<dbReference type="Pfam" id="PF00920">
    <property type="entry name" value="ILVD_EDD_N"/>
    <property type="match status" value="1"/>
</dbReference>
<dbReference type="SUPFAM" id="SSF143975">
    <property type="entry name" value="IlvD/EDD N-terminal domain-like"/>
    <property type="match status" value="1"/>
</dbReference>
<dbReference type="SUPFAM" id="SSF52016">
    <property type="entry name" value="LeuD/IlvD-like"/>
    <property type="match status" value="1"/>
</dbReference>
<dbReference type="PROSITE" id="PS00886">
    <property type="entry name" value="ILVD_EDD_1"/>
    <property type="match status" value="1"/>
</dbReference>
<dbReference type="PROSITE" id="PS00887">
    <property type="entry name" value="ILVD_EDD_2"/>
    <property type="match status" value="1"/>
</dbReference>
<name>ILVD_AGRFC</name>